<accession>Q9FF98</accession>
<evidence type="ECO:0000255" key="1"/>
<evidence type="ECO:0000269" key="2">
    <source>
    </source>
</evidence>
<evidence type="ECO:0000269" key="3">
    <source>
    </source>
</evidence>
<evidence type="ECO:0000303" key="4">
    <source>
    </source>
</evidence>
<evidence type="ECO:0000312" key="5">
    <source>
        <dbReference type="Araport" id="AT5G23820"/>
    </source>
</evidence>
<evidence type="ECO:0000312" key="6">
    <source>
        <dbReference type="EMBL" id="ABH03542.1"/>
    </source>
</evidence>
<evidence type="ECO:0000312" key="7">
    <source>
        <dbReference type="EMBL" id="BAB10055.1"/>
    </source>
</evidence>
<organism>
    <name type="scientific">Arabidopsis thaliana</name>
    <name type="common">Mouse-ear cress</name>
    <dbReference type="NCBI Taxonomy" id="3702"/>
    <lineage>
        <taxon>Eukaryota</taxon>
        <taxon>Viridiplantae</taxon>
        <taxon>Streptophyta</taxon>
        <taxon>Embryophyta</taxon>
        <taxon>Tracheophyta</taxon>
        <taxon>Spermatophyta</taxon>
        <taxon>Magnoliopsida</taxon>
        <taxon>eudicotyledons</taxon>
        <taxon>Gunneridae</taxon>
        <taxon>Pentapetalae</taxon>
        <taxon>rosids</taxon>
        <taxon>malvids</taxon>
        <taxon>Brassicales</taxon>
        <taxon>Brassicaceae</taxon>
        <taxon>Camelineae</taxon>
        <taxon>Arabidopsis</taxon>
    </lineage>
</organism>
<gene>
    <name evidence="4" type="primary">ML3</name>
    <name evidence="6" type="synonym">UQI3</name>
    <name evidence="5" type="ordered locus">At5g23820</name>
    <name evidence="7" type="ORF">MRO11.14</name>
</gene>
<reference key="1">
    <citation type="submission" date="2006-06" db="EMBL/GenBank/DDBJ databases">
        <title>Functional differentiation of ubiquitin-interacting factors from Arabidopsis.</title>
        <authorList>
            <person name="Fu H."/>
        </authorList>
    </citation>
    <scope>NUCLEOTIDE SEQUENCE [MRNA]</scope>
</reference>
<reference key="2">
    <citation type="journal article" date="1997" name="DNA Res.">
        <title>Structural analysis of Arabidopsis thaliana chromosome 5. I. Sequence features of the 1.6 Mb regions covered by twenty physically assigned P1 clones.</title>
        <authorList>
            <person name="Sato S."/>
            <person name="Kotani H."/>
            <person name="Nakamura Y."/>
            <person name="Kaneko T."/>
            <person name="Asamizu E."/>
            <person name="Fukami M."/>
            <person name="Miyajima N."/>
            <person name="Tabata S."/>
        </authorList>
    </citation>
    <scope>NUCLEOTIDE SEQUENCE [LARGE SCALE GENOMIC DNA]</scope>
    <source>
        <strain>cv. Columbia</strain>
    </source>
</reference>
<reference key="3">
    <citation type="journal article" date="2017" name="Plant J.">
        <title>Araport11: a complete reannotation of the Arabidopsis thaliana reference genome.</title>
        <authorList>
            <person name="Cheng C.Y."/>
            <person name="Krishnakumar V."/>
            <person name="Chan A.P."/>
            <person name="Thibaud-Nissen F."/>
            <person name="Schobel S."/>
            <person name="Town C.D."/>
        </authorList>
    </citation>
    <scope>GENOME REANNOTATION</scope>
    <source>
        <strain>cv. Columbia</strain>
    </source>
</reference>
<reference key="4">
    <citation type="journal article" date="2003" name="Science">
        <title>Empirical analysis of transcriptional activity in the Arabidopsis genome.</title>
        <authorList>
            <person name="Yamada K."/>
            <person name="Lim J."/>
            <person name="Dale J.M."/>
            <person name="Chen H."/>
            <person name="Shinn P."/>
            <person name="Palm C.J."/>
            <person name="Southwick A.M."/>
            <person name="Wu H.C."/>
            <person name="Kim C.J."/>
            <person name="Nguyen M."/>
            <person name="Pham P.K."/>
            <person name="Cheuk R.F."/>
            <person name="Karlin-Newmann G."/>
            <person name="Liu S.X."/>
            <person name="Lam B."/>
            <person name="Sakano H."/>
            <person name="Wu T."/>
            <person name="Yu G."/>
            <person name="Miranda M."/>
            <person name="Quach H.L."/>
            <person name="Tripp M."/>
            <person name="Chang C.H."/>
            <person name="Lee J.M."/>
            <person name="Toriumi M.J."/>
            <person name="Chan M.M."/>
            <person name="Tang C.C."/>
            <person name="Onodera C.S."/>
            <person name="Deng J.M."/>
            <person name="Akiyama K."/>
            <person name="Ansari Y."/>
            <person name="Arakawa T."/>
            <person name="Banh J."/>
            <person name="Banno F."/>
            <person name="Bowser L."/>
            <person name="Brooks S.Y."/>
            <person name="Carninci P."/>
            <person name="Chao Q."/>
            <person name="Choy N."/>
            <person name="Enju A."/>
            <person name="Goldsmith A.D."/>
            <person name="Gurjal M."/>
            <person name="Hansen N.F."/>
            <person name="Hayashizaki Y."/>
            <person name="Johnson-Hopson C."/>
            <person name="Hsuan V.W."/>
            <person name="Iida K."/>
            <person name="Karnes M."/>
            <person name="Khan S."/>
            <person name="Koesema E."/>
            <person name="Ishida J."/>
            <person name="Jiang P.X."/>
            <person name="Jones T."/>
            <person name="Kawai J."/>
            <person name="Kamiya A."/>
            <person name="Meyers C."/>
            <person name="Nakajima M."/>
            <person name="Narusaka M."/>
            <person name="Seki M."/>
            <person name="Sakurai T."/>
            <person name="Satou M."/>
            <person name="Tamse R."/>
            <person name="Vaysberg M."/>
            <person name="Wallender E.K."/>
            <person name="Wong C."/>
            <person name="Yamamura Y."/>
            <person name="Yuan S."/>
            <person name="Shinozaki K."/>
            <person name="Davis R.W."/>
            <person name="Theologis A."/>
            <person name="Ecker J.R."/>
        </authorList>
    </citation>
    <scope>NUCLEOTIDE SEQUENCE [LARGE SCALE MRNA]</scope>
    <source>
        <strain>cv. Columbia</strain>
    </source>
</reference>
<reference key="5">
    <citation type="journal article" date="2013" name="J. Exp. Bot.">
        <title>ML3: a novel regulator of herbivory-induced responses in Arabidopsis thaliana.</title>
        <authorList>
            <person name="Fridborg I."/>
            <person name="Johansson A."/>
            <person name="Lagensjoe J."/>
            <person name="Leelarasamee N."/>
            <person name="Flokova K."/>
            <person name="Tarkowska D."/>
            <person name="Meijer J."/>
            <person name="Bejai S."/>
        </authorList>
    </citation>
    <scope>FUNCTION</scope>
    <scope>INDUCTION</scope>
    <scope>DISRUPTION PHENOTYPE</scope>
</reference>
<reference key="6">
    <citation type="journal article" date="2013" name="Plant Physiol.">
        <title>ML3 is a NEDD8- and ubiquitin-modified protein.</title>
        <authorList>
            <person name="Hakenjos J.P."/>
            <person name="Bejai S."/>
            <person name="Ranftl Q."/>
            <person name="Behringer C."/>
            <person name="Vlot A.C."/>
            <person name="Absmanner B."/>
            <person name="Hammes U."/>
            <person name="Heinzlmeir S."/>
            <person name="Kuster B."/>
            <person name="Schwechheimer C."/>
        </authorList>
    </citation>
    <scope>FUNCTION</scope>
    <scope>INTERACTION WITH RUB1/NEDD8</scope>
    <scope>SUBCELLULAR LOCATION</scope>
    <scope>INDUCTION</scope>
    <scope>NEDDYLATION</scope>
    <scope>UBIQUITINATION</scope>
</reference>
<dbReference type="EMBL" id="DQ785475">
    <property type="protein sequence ID" value="ABH03542.1"/>
    <property type="molecule type" value="mRNA"/>
</dbReference>
<dbReference type="EMBL" id="AB005244">
    <property type="protein sequence ID" value="BAB10055.1"/>
    <property type="molecule type" value="Genomic_DNA"/>
</dbReference>
<dbReference type="EMBL" id="CP002688">
    <property type="protein sequence ID" value="AED93217.1"/>
    <property type="molecule type" value="Genomic_DNA"/>
</dbReference>
<dbReference type="EMBL" id="AY050390">
    <property type="protein sequence ID" value="AAK91407.1"/>
    <property type="molecule type" value="mRNA"/>
</dbReference>
<dbReference type="EMBL" id="AY097347">
    <property type="protein sequence ID" value="AAM19863.1"/>
    <property type="molecule type" value="mRNA"/>
</dbReference>
<dbReference type="RefSeq" id="NP_197771.1">
    <property type="nucleotide sequence ID" value="NM_122287.4"/>
</dbReference>
<dbReference type="SMR" id="Q9FF98"/>
<dbReference type="FunCoup" id="Q9FF98">
    <property type="interactions" value="1"/>
</dbReference>
<dbReference type="IntAct" id="Q9FF98">
    <property type="interactions" value="2"/>
</dbReference>
<dbReference type="STRING" id="3702.Q9FF98"/>
<dbReference type="iPTMnet" id="Q9FF98"/>
<dbReference type="PaxDb" id="3702-AT5G23820.1"/>
<dbReference type="ProteomicsDB" id="238708"/>
<dbReference type="EnsemblPlants" id="AT5G23820.1">
    <property type="protein sequence ID" value="AT5G23820.1"/>
    <property type="gene ID" value="AT5G23820"/>
</dbReference>
<dbReference type="GeneID" id="832447"/>
<dbReference type="Gramene" id="AT5G23820.1">
    <property type="protein sequence ID" value="AT5G23820.1"/>
    <property type="gene ID" value="AT5G23820"/>
</dbReference>
<dbReference type="KEGG" id="ath:AT5G23820"/>
<dbReference type="Araport" id="AT5G23820"/>
<dbReference type="TAIR" id="AT5G23820">
    <property type="gene designation" value="ML3"/>
</dbReference>
<dbReference type="HOGENOM" id="CLU_115127_0_0_1"/>
<dbReference type="InParanoid" id="Q9FF98"/>
<dbReference type="OMA" id="SACNNEA"/>
<dbReference type="PhylomeDB" id="Q9FF98"/>
<dbReference type="PRO" id="PR:Q9FF98"/>
<dbReference type="Proteomes" id="UP000006548">
    <property type="component" value="Chromosome 5"/>
</dbReference>
<dbReference type="ExpressionAtlas" id="Q9FF98">
    <property type="expression patterns" value="baseline and differential"/>
</dbReference>
<dbReference type="GO" id="GO:0005783">
    <property type="term" value="C:endoplasmic reticulum"/>
    <property type="evidence" value="ECO:0007669"/>
    <property type="project" value="UniProtKB-SubCell"/>
</dbReference>
<dbReference type="GO" id="GO:0010168">
    <property type="term" value="C:ER body"/>
    <property type="evidence" value="ECO:0000314"/>
    <property type="project" value="TAIR"/>
</dbReference>
<dbReference type="GO" id="GO:0000325">
    <property type="term" value="C:plant-type vacuole"/>
    <property type="evidence" value="ECO:0000314"/>
    <property type="project" value="TAIR"/>
</dbReference>
<dbReference type="GO" id="GO:0099503">
    <property type="term" value="C:secretory vesicle"/>
    <property type="evidence" value="ECO:0007005"/>
    <property type="project" value="TAIR"/>
</dbReference>
<dbReference type="GO" id="GO:0006952">
    <property type="term" value="P:defense response"/>
    <property type="evidence" value="ECO:0000315"/>
    <property type="project" value="TAIR"/>
</dbReference>
<dbReference type="InterPro" id="IPR003172">
    <property type="entry name" value="ML_dom"/>
</dbReference>
<dbReference type="Pfam" id="PF02221">
    <property type="entry name" value="E1_DerP2_DerF2"/>
    <property type="match status" value="1"/>
</dbReference>
<dbReference type="SMART" id="SM00737">
    <property type="entry name" value="ML"/>
    <property type="match status" value="1"/>
</dbReference>
<comment type="function">
    <text evidence="2 3">May be involved in herbivory-mediated responses. May play a role in herbivory-associated molecular pattern (HAMP) recognition. May function is jasmonate (JA) signaling in response to HAMP (PubMed:23314818). May play a role in defense response against the pathogens Altenaria brassicicola and Pseudomonas syringae (PubMed:23903439).</text>
</comment>
<comment type="subunit">
    <text evidence="3">Interacts with RUB1/NEDD8.</text>
</comment>
<comment type="subcellular location">
    <subcellularLocation>
        <location evidence="3">Vacuole</location>
    </subcellularLocation>
    <subcellularLocation>
        <location evidence="3">Endoplasmic reticulum</location>
    </subcellularLocation>
    <text evidence="3">Localized in endoplasmic reticulum bodies (ER bodies).</text>
</comment>
<comment type="induction">
    <text evidence="2 3">Induced by the diamond-back moth Plutella xylostella and the generalist herbivore Spodoptora littoralis (PubMed:23314818). Induced by jasmonate (JA) (PubMed:23314818, PubMed:23903439). Induced by wounding (PubMed:23903439). Down-regulated by salicylic acid (SA) (PubMed:23314818). Down-regulated by ethylene (PubMed:23903439).</text>
</comment>
<comment type="PTM">
    <text evidence="3">Neddylated.</text>
</comment>
<comment type="PTM">
    <text evidence="3">Ubiquitinated.</text>
</comment>
<comment type="disruption phenotype">
    <text evidence="2">Semi-dwarf phenotype.</text>
</comment>
<comment type="miscellaneous">
    <text evidence="3">Transcriptionally regulated by NAI1, a transcription activator which mediates the formation of endoplasmic reticulum bodies (ER bodies). ER bodies are rod-shaped ER-derived structures produced by plants of the Brassicales order.</text>
</comment>
<proteinExistence type="evidence at protein level"/>
<sequence>MAMSHVQPMLLLLVSLFFLPALRGAIDFEYCAKNGNDYGTVTSIVVSPSVGPHENPTITINLFGSASKNIPAGTLVYVAFRDGEFTGLLKTYNLCDVSACNNEAEIEAGTNFELTLSDVLYVGYDEEIKYSVSLRRKTLEEEDPIIKMCVDFKVPAPAPAFVSI</sequence>
<feature type="signal peptide" evidence="1">
    <location>
        <begin position="1"/>
        <end position="24"/>
    </location>
</feature>
<feature type="chain" id="PRO_5010847800" description="MD-2-related lipid-recognition protein 3">
    <location>
        <begin position="25"/>
        <end position="164"/>
    </location>
</feature>
<protein>
    <recommendedName>
        <fullName evidence="4">MD-2-related lipid-recognition protein 3</fullName>
    </recommendedName>
</protein>
<keyword id="KW-0256">Endoplasmic reticulum</keyword>
<keyword id="KW-0611">Plant defense</keyword>
<keyword id="KW-1185">Reference proteome</keyword>
<keyword id="KW-0732">Signal</keyword>
<keyword id="KW-0832">Ubl conjugation</keyword>
<keyword id="KW-0926">Vacuole</keyword>
<name>ML3_ARATH</name>